<gene>
    <name evidence="3" type="primary">cpeA1</name>
</gene>
<reference evidence="3" key="1">
    <citation type="journal article" date="2014" name="Proc. Natl. Acad. Sci. U.S.A.">
        <title>Single-residue insertion switches the quaternary structure and exciton states of cryptophyte light-harvesting proteins.</title>
        <authorList>
            <person name="Harrop S.J."/>
            <person name="Wilk K.E."/>
            <person name="Dinshaw R."/>
            <person name="Collini E."/>
            <person name="Mirkovic T."/>
            <person name="Teng C.Y."/>
            <person name="Oblinsky D.G."/>
            <person name="Green B.R."/>
            <person name="Hoef-Emden K."/>
            <person name="Hiller R.G."/>
            <person name="Scholes G.D."/>
            <person name="Curmi P.M."/>
        </authorList>
    </citation>
    <scope>NUCLEOTIDE SEQUENCE [MRNA]</scope>
    <scope>X-RAY CRYSTALLOGRAPHY (1.70 ANGSTROMS) OF 48-109 IN COMPLEX WITH PHYCOCYANOBILIN</scope>
    <scope>SUBUNIT</scope>
    <source>
        <strain evidence="3">M1635</strain>
    </source>
</reference>
<keyword id="KW-0002">3D-structure</keyword>
<keyword id="KW-0089">Bile pigment</keyword>
<keyword id="KW-0150">Chloroplast</keyword>
<keyword id="KW-0157">Chromophore</keyword>
<keyword id="KW-0249">Electron transport</keyword>
<keyword id="KW-0472">Membrane</keyword>
<keyword id="KW-0602">Photosynthesis</keyword>
<keyword id="KW-0934">Plastid</keyword>
<keyword id="KW-0793">Thylakoid</keyword>
<keyword id="KW-0813">Transport</keyword>
<organism>
    <name type="scientific">Hemiselmis virescens</name>
    <dbReference type="NCBI Taxonomy" id="77927"/>
    <lineage>
        <taxon>Eukaryota</taxon>
        <taxon>Cryptophyceae</taxon>
        <taxon>Cryptomonadales</taxon>
        <taxon>Hemiselmidaceae</taxon>
        <taxon>Hemiselmis</taxon>
    </lineage>
</organism>
<accession>C0HM11</accession>
<accession>A0A075B5G1</accession>
<accession>A0A075BTU2</accession>
<evidence type="ECO:0000269" key="1">
    <source>
    </source>
</evidence>
<evidence type="ECO:0000305" key="2"/>
<evidence type="ECO:0000312" key="3">
    <source>
        <dbReference type="EMBL" id="AGR45601.1"/>
    </source>
</evidence>
<evidence type="ECO:0007744" key="4">
    <source>
        <dbReference type="PDB" id="4LM6"/>
    </source>
</evidence>
<evidence type="ECO:0007829" key="5">
    <source>
        <dbReference type="PDB" id="4LM6"/>
    </source>
</evidence>
<sequence>MYTKAVLLAFVGSAAAFNAPMMTVRRDAIATGAAAAVVAPLLRPAGAKMATDSKAPLIELFDERDGCKGPAANKASDVGEPGLCVKVSMQKVAMNAAAAKSVATNYMRK</sequence>
<proteinExistence type="evidence at protein level"/>
<feature type="chain" id="PRO_5007375773" description="Phycoerythrin alpha-1 subunit">
    <location>
        <begin position="1"/>
        <end position="109"/>
    </location>
</feature>
<feature type="binding site" evidence="1 4">
    <location>
        <position position="6"/>
    </location>
    <ligand>
        <name>(2R,3E)-phycocyanobilin</name>
        <dbReference type="ChEBI" id="CHEBI:85275"/>
        <label>1</label>
        <note>ligand shared with beta subunit</note>
    </ligand>
</feature>
<feature type="binding site" evidence="1 4">
    <location>
        <position position="16"/>
    </location>
    <ligand>
        <name>(2R,3E)-phycocyanobilin</name>
        <dbReference type="ChEBI" id="CHEBI:85275"/>
        <label>3</label>
        <note>ligand shared with beta subunit</note>
    </ligand>
</feature>
<feature type="binding site" evidence="1 4">
    <location>
        <position position="17"/>
    </location>
    <ligand>
        <name>(2R,3E)-phycocyanobilin</name>
        <dbReference type="ChEBI" id="CHEBI:85275"/>
        <label>2</label>
        <note>ligand shared with beta subunit</note>
    </ligand>
</feature>
<feature type="binding site" description="covalent" evidence="1 4">
    <location>
        <position position="20"/>
    </location>
    <ligand>
        <name>(2R,3E)-phycocyanobilin</name>
        <dbReference type="ChEBI" id="CHEBI:85275"/>
        <label>3</label>
        <note>ligand shared with beta subunit</note>
    </ligand>
</feature>
<feature type="binding site" evidence="1 4">
    <location>
        <position position="27"/>
    </location>
    <ligand>
        <name>(2R,3E)-phycocyanobilin</name>
        <dbReference type="ChEBI" id="CHEBI:85275"/>
        <label>3</label>
        <note>ligand shared with beta subunit</note>
    </ligand>
</feature>
<feature type="binding site" evidence="1 4">
    <location>
        <position position="28"/>
    </location>
    <ligand>
        <name>(2R,3E)-phycocyanobilin</name>
        <dbReference type="ChEBI" id="CHEBI:85275"/>
        <label>3</label>
        <note>ligand shared with beta subunit</note>
    </ligand>
</feature>
<feature type="binding site" evidence="1 4">
    <location>
        <position position="39"/>
    </location>
    <ligand>
        <name>(2R,3E)-phycocyanobilin</name>
        <dbReference type="ChEBI" id="CHEBI:85275"/>
        <label>3</label>
        <note>ligand shared with beta subunit</note>
    </ligand>
</feature>
<feature type="strand" evidence="5">
    <location>
        <begin position="54"/>
        <end position="62"/>
    </location>
</feature>
<feature type="strand" evidence="5">
    <location>
        <begin position="83"/>
        <end position="91"/>
    </location>
</feature>
<feature type="helix" evidence="5">
    <location>
        <begin position="96"/>
        <end position="105"/>
    </location>
</feature>
<geneLocation type="chloroplast" evidence="2"/>
<protein>
    <recommendedName>
        <fullName evidence="2">Phycoerythrin alpha-1 subunit</fullName>
    </recommendedName>
</protein>
<dbReference type="EMBL" id="KC905456">
    <property type="protein sequence ID" value="AGR45601.1"/>
    <property type="molecule type" value="mRNA"/>
</dbReference>
<dbReference type="PDB" id="4LM6">
    <property type="method" value="X-ray"/>
    <property type="resolution" value="1.70 A"/>
    <property type="chains" value="A/C=48-109"/>
</dbReference>
<dbReference type="PDBsum" id="4LM6"/>
<dbReference type="SMR" id="C0HM11"/>
<dbReference type="GO" id="GO:0009535">
    <property type="term" value="C:chloroplast thylakoid membrane"/>
    <property type="evidence" value="ECO:0007669"/>
    <property type="project" value="UniProtKB-SubCell"/>
</dbReference>
<dbReference type="GO" id="GO:0030089">
    <property type="term" value="C:phycobilisome"/>
    <property type="evidence" value="ECO:0007669"/>
    <property type="project" value="InterPro"/>
</dbReference>
<dbReference type="GO" id="GO:0015979">
    <property type="term" value="P:photosynthesis"/>
    <property type="evidence" value="ECO:0007669"/>
    <property type="project" value="UniProtKB-KW"/>
</dbReference>
<dbReference type="Gene3D" id="3.90.510.10">
    <property type="entry name" value="Phycoerythrin alpha chain"/>
    <property type="match status" value="1"/>
</dbReference>
<dbReference type="InterPro" id="IPR011070">
    <property type="entry name" value="Globular_prot_asu/bsu"/>
</dbReference>
<dbReference type="InterPro" id="IPR037011">
    <property type="entry name" value="Phycoerythr-like_a_sf"/>
</dbReference>
<dbReference type="SUPFAM" id="SSF56568">
    <property type="entry name" value="Non-globular alpha+beta subunits of globular proteins"/>
    <property type="match status" value="1"/>
</dbReference>
<comment type="function">
    <text evidence="2">Light-harvesting photosynthetic tetrapyrrole chromophore-protein from the phycobiliprotein complex.</text>
</comment>
<comment type="subunit">
    <text evidence="1">Heterotetramer of 2 identical alpha chains and 2 identical beta chains which form 2 alpha-beta heterodimers within the heterotetramer. The two alpha-beta heterodimers are rotated to an open configuration in contrast to the closed configuration found in other cryptophyte species due to the insertion of a single amino acid, Asp-65, in a conserved region of the alpha chain. In the open form, the central chromophores are not in physical contact but are separated by a water-filled channel.</text>
</comment>
<comment type="subcellular location">
    <subcellularLocation>
        <location evidence="2">Plastid</location>
        <location evidence="2">Chloroplast thylakoid membrane</location>
        <topology evidence="2">Peripheral membrane protein</topology>
        <orientation evidence="2">Lumenal side</orientation>
    </subcellularLocation>
</comment>
<comment type="PTM">
    <text evidence="1">Contains three phycocyanobilin chromophores with binding mediated by both the alpha and beta subunits.</text>
</comment>
<comment type="miscellaneous">
    <text evidence="2">The light-harvesting system in Cryptophytes contains phycobiliprotein complexes. Unusually they are composed of either phycoerythrin (CPE) or phycocyanin (CPC) but never allophycocyanin (APC), with only one type of biliprotein being present in any one species. Unlike cyanobacteria or red algae these proteins are not arranged into higher-order phycobilisome complexes, and they are found in the thylakoid lumen.</text>
</comment>
<comment type="similarity">
    <text evidence="2">Belongs to the phycoerythrin family.</text>
</comment>
<name>PHEA1_HEMVI</name>